<protein>
    <recommendedName>
        <fullName>Membrane protein FAM174B</fullName>
    </recommendedName>
</protein>
<sequence length="159" mass="16654">MRAALPPARLLPLLLLLALLGAPAARASRAQSAAPPQPGAERQPRPPPGPGPGNATGTGSGEAAGGGGSSNSSGDALVTRISSLLRDLHTLKAAVIVACAFTAFLIACLLLRVFRSGKRLKKTRKYDIITTPAERVEMAPLNEEDDEDEDSTVFDIKYR</sequence>
<reference key="1">
    <citation type="submission" date="2006-04" db="EMBL/GenBank/DDBJ databases">
        <authorList>
            <consortium name="NIH - Mammalian Gene Collection (MGC) project"/>
        </authorList>
    </citation>
    <scope>NUCLEOTIDE SEQUENCE [LARGE SCALE MRNA]</scope>
    <source>
        <strain>Crossbred X Angus</strain>
        <tissue>Liver</tissue>
    </source>
</reference>
<name>F174B_BOVIN</name>
<organism>
    <name type="scientific">Bos taurus</name>
    <name type="common">Bovine</name>
    <dbReference type="NCBI Taxonomy" id="9913"/>
    <lineage>
        <taxon>Eukaryota</taxon>
        <taxon>Metazoa</taxon>
        <taxon>Chordata</taxon>
        <taxon>Craniata</taxon>
        <taxon>Vertebrata</taxon>
        <taxon>Euteleostomi</taxon>
        <taxon>Mammalia</taxon>
        <taxon>Eutheria</taxon>
        <taxon>Laurasiatheria</taxon>
        <taxon>Artiodactyla</taxon>
        <taxon>Ruminantia</taxon>
        <taxon>Pecora</taxon>
        <taxon>Bovidae</taxon>
        <taxon>Bovinae</taxon>
        <taxon>Bos</taxon>
    </lineage>
</organism>
<dbReference type="EMBL" id="BC114840">
    <property type="protein sequence ID" value="AAI14841.1"/>
    <property type="molecule type" value="mRNA"/>
</dbReference>
<dbReference type="RefSeq" id="NP_001069818.1">
    <property type="nucleotide sequence ID" value="NM_001076350.1"/>
</dbReference>
<dbReference type="SMR" id="Q1RMK9"/>
<dbReference type="FunCoup" id="Q1RMK9">
    <property type="interactions" value="45"/>
</dbReference>
<dbReference type="STRING" id="9913.ENSBTAP00000031187"/>
<dbReference type="GlyCosmos" id="Q1RMK9">
    <property type="glycosylation" value="1 site, No reported glycans"/>
</dbReference>
<dbReference type="GlyGen" id="Q1RMK9">
    <property type="glycosylation" value="1 site"/>
</dbReference>
<dbReference type="PaxDb" id="9913-ENSBTAP00000031187"/>
<dbReference type="GeneID" id="614841"/>
<dbReference type="KEGG" id="bta:614841"/>
<dbReference type="CTD" id="400451"/>
<dbReference type="eggNOG" id="ENOG502S4RE">
    <property type="taxonomic scope" value="Eukaryota"/>
</dbReference>
<dbReference type="InParanoid" id="Q1RMK9"/>
<dbReference type="OrthoDB" id="9950075at2759"/>
<dbReference type="Proteomes" id="UP000009136">
    <property type="component" value="Unplaced"/>
</dbReference>
<dbReference type="GO" id="GO:0005794">
    <property type="term" value="C:Golgi apparatus"/>
    <property type="evidence" value="ECO:0000250"/>
    <property type="project" value="UniProtKB"/>
</dbReference>
<dbReference type="GO" id="GO:0005886">
    <property type="term" value="C:plasma membrane"/>
    <property type="evidence" value="ECO:0000250"/>
    <property type="project" value="UniProtKB"/>
</dbReference>
<dbReference type="GO" id="GO:0007030">
    <property type="term" value="P:Golgi organization"/>
    <property type="evidence" value="ECO:0000250"/>
    <property type="project" value="UniProtKB"/>
</dbReference>
<dbReference type="InterPro" id="IPR009565">
    <property type="entry name" value="FAM174-like"/>
</dbReference>
<dbReference type="PANTHER" id="PTHR28607">
    <property type="entry name" value="EXPRESSED PROTEIN"/>
    <property type="match status" value="1"/>
</dbReference>
<dbReference type="PANTHER" id="PTHR28607:SF3">
    <property type="entry name" value="MEMBRANE PROTEIN FAM174B"/>
    <property type="match status" value="1"/>
</dbReference>
<dbReference type="Pfam" id="PF06679">
    <property type="entry name" value="DUF1180"/>
    <property type="match status" value="1"/>
</dbReference>
<keyword id="KW-1003">Cell membrane</keyword>
<keyword id="KW-0325">Glycoprotein</keyword>
<keyword id="KW-0333">Golgi apparatus</keyword>
<keyword id="KW-0472">Membrane</keyword>
<keyword id="KW-1185">Reference proteome</keyword>
<keyword id="KW-0732">Signal</keyword>
<keyword id="KW-0812">Transmembrane</keyword>
<keyword id="KW-1133">Transmembrane helix</keyword>
<comment type="function">
    <text evidence="1">Essential for Golgi structural integrity.</text>
</comment>
<comment type="subcellular location">
    <subcellularLocation>
        <location evidence="1">Cell membrane</location>
        <topology evidence="2">Single-pass type I membrane protein</topology>
    </subcellularLocation>
    <subcellularLocation>
        <location evidence="1">Golgi apparatus</location>
    </subcellularLocation>
</comment>
<comment type="similarity">
    <text evidence="4">Belongs to the FAM174 family.</text>
</comment>
<proteinExistence type="evidence at transcript level"/>
<evidence type="ECO:0000250" key="1">
    <source>
        <dbReference type="UniProtKB" id="Q3ZCQ3"/>
    </source>
</evidence>
<evidence type="ECO:0000255" key="2"/>
<evidence type="ECO:0000256" key="3">
    <source>
        <dbReference type="SAM" id="MobiDB-lite"/>
    </source>
</evidence>
<evidence type="ECO:0000305" key="4"/>
<accession>Q1RMK9</accession>
<feature type="signal peptide" evidence="2">
    <location>
        <begin position="1"/>
        <end position="27"/>
    </location>
</feature>
<feature type="chain" id="PRO_0000326113" description="Membrane protein FAM174B">
    <location>
        <begin position="28"/>
        <end position="159"/>
    </location>
</feature>
<feature type="topological domain" description="Extracellular" evidence="2">
    <location>
        <begin position="28"/>
        <end position="90"/>
    </location>
</feature>
<feature type="transmembrane region" description="Helical" evidence="2">
    <location>
        <begin position="91"/>
        <end position="111"/>
    </location>
</feature>
<feature type="topological domain" description="Cytoplasmic" evidence="2">
    <location>
        <begin position="112"/>
        <end position="159"/>
    </location>
</feature>
<feature type="region of interest" description="Disordered" evidence="3">
    <location>
        <begin position="28"/>
        <end position="73"/>
    </location>
</feature>
<feature type="compositionally biased region" description="Gly residues" evidence="3">
    <location>
        <begin position="52"/>
        <end position="69"/>
    </location>
</feature>
<feature type="glycosylation site" description="N-linked (GlcNAc...) asparagine" evidence="2">
    <location>
        <position position="54"/>
    </location>
</feature>
<gene>
    <name type="primary">FAM174B</name>
</gene>